<evidence type="ECO:0000255" key="1">
    <source>
        <dbReference type="HAMAP-Rule" id="MF_00362"/>
    </source>
</evidence>
<evidence type="ECO:0000305" key="2"/>
<sequence length="172" mass="18157">MERAEKREFVTELNEVFKASGSVVVAHYAGVTVAQMNDFRSKMRAAGGTVRVAKNRLAKIALQGTESEGMTDLFKGQTLIAFSEDPVTAPKVVMDFAKTNDKLVVLGGAMGATTLNAEGVKSLATLPSLDELRAKLLGLINAPATRVATVVAAPASQLARVFSAYAKKDEAA</sequence>
<name>RL10_RHIME</name>
<gene>
    <name evidence="1" type="primary">rplJ</name>
    <name type="ordered locus">R01346</name>
    <name type="ORF">SMc01319</name>
</gene>
<proteinExistence type="inferred from homology"/>
<keyword id="KW-1185">Reference proteome</keyword>
<keyword id="KW-0687">Ribonucleoprotein</keyword>
<keyword id="KW-0689">Ribosomal protein</keyword>
<keyword id="KW-0694">RNA-binding</keyword>
<keyword id="KW-0699">rRNA-binding</keyword>
<dbReference type="EMBL" id="AL591688">
    <property type="protein sequence ID" value="CAC45925.1"/>
    <property type="molecule type" value="Genomic_DNA"/>
</dbReference>
<dbReference type="RefSeq" id="NP_385452.1">
    <property type="nucleotide sequence ID" value="NC_003047.1"/>
</dbReference>
<dbReference type="RefSeq" id="WP_003536192.1">
    <property type="nucleotide sequence ID" value="NC_003047.1"/>
</dbReference>
<dbReference type="SMR" id="Q92QH9"/>
<dbReference type="EnsemblBacteria" id="CAC45925">
    <property type="protein sequence ID" value="CAC45925"/>
    <property type="gene ID" value="SMc01319"/>
</dbReference>
<dbReference type="GeneID" id="89575670"/>
<dbReference type="KEGG" id="sme:SMc01319"/>
<dbReference type="PATRIC" id="fig|266834.11.peg.2761"/>
<dbReference type="eggNOG" id="COG0244">
    <property type="taxonomic scope" value="Bacteria"/>
</dbReference>
<dbReference type="HOGENOM" id="CLU_092227_0_0_5"/>
<dbReference type="OrthoDB" id="9791972at2"/>
<dbReference type="Proteomes" id="UP000001976">
    <property type="component" value="Chromosome"/>
</dbReference>
<dbReference type="GO" id="GO:0015934">
    <property type="term" value="C:large ribosomal subunit"/>
    <property type="evidence" value="ECO:0007669"/>
    <property type="project" value="InterPro"/>
</dbReference>
<dbReference type="GO" id="GO:0070180">
    <property type="term" value="F:large ribosomal subunit rRNA binding"/>
    <property type="evidence" value="ECO:0007669"/>
    <property type="project" value="UniProtKB-UniRule"/>
</dbReference>
<dbReference type="GO" id="GO:0003735">
    <property type="term" value="F:structural constituent of ribosome"/>
    <property type="evidence" value="ECO:0007669"/>
    <property type="project" value="InterPro"/>
</dbReference>
<dbReference type="GO" id="GO:0006412">
    <property type="term" value="P:translation"/>
    <property type="evidence" value="ECO:0007669"/>
    <property type="project" value="UniProtKB-UniRule"/>
</dbReference>
<dbReference type="CDD" id="cd05797">
    <property type="entry name" value="Ribosomal_L10"/>
    <property type="match status" value="1"/>
</dbReference>
<dbReference type="Gene3D" id="3.30.70.1730">
    <property type="match status" value="1"/>
</dbReference>
<dbReference type="Gene3D" id="6.10.250.290">
    <property type="match status" value="1"/>
</dbReference>
<dbReference type="HAMAP" id="MF_00362">
    <property type="entry name" value="Ribosomal_uL10"/>
    <property type="match status" value="1"/>
</dbReference>
<dbReference type="InterPro" id="IPR001790">
    <property type="entry name" value="Ribosomal_uL10"/>
</dbReference>
<dbReference type="InterPro" id="IPR043141">
    <property type="entry name" value="Ribosomal_uL10-like_sf"/>
</dbReference>
<dbReference type="InterPro" id="IPR022973">
    <property type="entry name" value="Ribosomal_uL10_bac"/>
</dbReference>
<dbReference type="InterPro" id="IPR047865">
    <property type="entry name" value="Ribosomal_uL10_bac_type"/>
</dbReference>
<dbReference type="InterPro" id="IPR002363">
    <property type="entry name" value="Ribosomal_uL10_CS_bac"/>
</dbReference>
<dbReference type="NCBIfam" id="NF000955">
    <property type="entry name" value="PRK00099.1-1"/>
    <property type="match status" value="1"/>
</dbReference>
<dbReference type="PANTHER" id="PTHR11560">
    <property type="entry name" value="39S RIBOSOMAL PROTEIN L10, MITOCHONDRIAL"/>
    <property type="match status" value="1"/>
</dbReference>
<dbReference type="Pfam" id="PF00466">
    <property type="entry name" value="Ribosomal_L10"/>
    <property type="match status" value="1"/>
</dbReference>
<dbReference type="SUPFAM" id="SSF160369">
    <property type="entry name" value="Ribosomal protein L10-like"/>
    <property type="match status" value="1"/>
</dbReference>
<dbReference type="PROSITE" id="PS01109">
    <property type="entry name" value="RIBOSOMAL_L10"/>
    <property type="match status" value="1"/>
</dbReference>
<organism>
    <name type="scientific">Rhizobium meliloti (strain 1021)</name>
    <name type="common">Ensifer meliloti</name>
    <name type="synonym">Sinorhizobium meliloti</name>
    <dbReference type="NCBI Taxonomy" id="266834"/>
    <lineage>
        <taxon>Bacteria</taxon>
        <taxon>Pseudomonadati</taxon>
        <taxon>Pseudomonadota</taxon>
        <taxon>Alphaproteobacteria</taxon>
        <taxon>Hyphomicrobiales</taxon>
        <taxon>Rhizobiaceae</taxon>
        <taxon>Sinorhizobium/Ensifer group</taxon>
        <taxon>Sinorhizobium</taxon>
    </lineage>
</organism>
<accession>Q92QH9</accession>
<protein>
    <recommendedName>
        <fullName evidence="1">Large ribosomal subunit protein uL10</fullName>
    </recommendedName>
    <alternativeName>
        <fullName evidence="2">50S ribosomal protein L10</fullName>
    </alternativeName>
</protein>
<comment type="function">
    <text evidence="1">Forms part of the ribosomal stalk, playing a central role in the interaction of the ribosome with GTP-bound translation factors.</text>
</comment>
<comment type="subunit">
    <text evidence="1">Part of the ribosomal stalk of the 50S ribosomal subunit. The N-terminus interacts with L11 and the large rRNA to form the base of the stalk. The C-terminus forms an elongated spine to which L12 dimers bind in a sequential fashion forming a multimeric L10(L12)X complex.</text>
</comment>
<comment type="similarity">
    <text evidence="1">Belongs to the universal ribosomal protein uL10 family.</text>
</comment>
<reference key="1">
    <citation type="journal article" date="2001" name="Proc. Natl. Acad. Sci. U.S.A.">
        <title>Analysis of the chromosome sequence of the legume symbiont Sinorhizobium meliloti strain 1021.</title>
        <authorList>
            <person name="Capela D."/>
            <person name="Barloy-Hubler F."/>
            <person name="Gouzy J."/>
            <person name="Bothe G."/>
            <person name="Ampe F."/>
            <person name="Batut J."/>
            <person name="Boistard P."/>
            <person name="Becker A."/>
            <person name="Boutry M."/>
            <person name="Cadieu E."/>
            <person name="Dreano S."/>
            <person name="Gloux S."/>
            <person name="Godrie T."/>
            <person name="Goffeau A."/>
            <person name="Kahn D."/>
            <person name="Kiss E."/>
            <person name="Lelaure V."/>
            <person name="Masuy D."/>
            <person name="Pohl T."/>
            <person name="Portetelle D."/>
            <person name="Puehler A."/>
            <person name="Purnelle B."/>
            <person name="Ramsperger U."/>
            <person name="Renard C."/>
            <person name="Thebault P."/>
            <person name="Vandenbol M."/>
            <person name="Weidner S."/>
            <person name="Galibert F."/>
        </authorList>
    </citation>
    <scope>NUCLEOTIDE SEQUENCE [LARGE SCALE GENOMIC DNA]</scope>
    <source>
        <strain>1021</strain>
    </source>
</reference>
<reference key="2">
    <citation type="journal article" date="2001" name="Science">
        <title>The composite genome of the legume symbiont Sinorhizobium meliloti.</title>
        <authorList>
            <person name="Galibert F."/>
            <person name="Finan T.M."/>
            <person name="Long S.R."/>
            <person name="Puehler A."/>
            <person name="Abola P."/>
            <person name="Ampe F."/>
            <person name="Barloy-Hubler F."/>
            <person name="Barnett M.J."/>
            <person name="Becker A."/>
            <person name="Boistard P."/>
            <person name="Bothe G."/>
            <person name="Boutry M."/>
            <person name="Bowser L."/>
            <person name="Buhrmester J."/>
            <person name="Cadieu E."/>
            <person name="Capela D."/>
            <person name="Chain P."/>
            <person name="Cowie A."/>
            <person name="Davis R.W."/>
            <person name="Dreano S."/>
            <person name="Federspiel N.A."/>
            <person name="Fisher R.F."/>
            <person name="Gloux S."/>
            <person name="Godrie T."/>
            <person name="Goffeau A."/>
            <person name="Golding B."/>
            <person name="Gouzy J."/>
            <person name="Gurjal M."/>
            <person name="Hernandez-Lucas I."/>
            <person name="Hong A."/>
            <person name="Huizar L."/>
            <person name="Hyman R.W."/>
            <person name="Jones T."/>
            <person name="Kahn D."/>
            <person name="Kahn M.L."/>
            <person name="Kalman S."/>
            <person name="Keating D.H."/>
            <person name="Kiss E."/>
            <person name="Komp C."/>
            <person name="Lelaure V."/>
            <person name="Masuy D."/>
            <person name="Palm C."/>
            <person name="Peck M.C."/>
            <person name="Pohl T.M."/>
            <person name="Portetelle D."/>
            <person name="Purnelle B."/>
            <person name="Ramsperger U."/>
            <person name="Surzycki R."/>
            <person name="Thebault P."/>
            <person name="Vandenbol M."/>
            <person name="Vorhoelter F.J."/>
            <person name="Weidner S."/>
            <person name="Wells D.H."/>
            <person name="Wong K."/>
            <person name="Yeh K.-C."/>
            <person name="Batut J."/>
        </authorList>
    </citation>
    <scope>NUCLEOTIDE SEQUENCE [LARGE SCALE GENOMIC DNA]</scope>
    <source>
        <strain>1021</strain>
    </source>
</reference>
<feature type="chain" id="PRO_0000154695" description="Large ribosomal subunit protein uL10">
    <location>
        <begin position="1"/>
        <end position="172"/>
    </location>
</feature>